<accession>F1SY99</accession>
<sequence length="498" mass="56594">MEDKAQYVFALLGILATLYFVRWSTDPLRHIPAIGPSAPIVSYLSAYRYCRNAQSILQEGYHKYKVFRVSLVDRWVVVVSGADMNEELRKVPDTHVSFQEAADDLIQLKYTIAPDVNEHPIHTPVIRGPLTRNLGALFPDVVDEINVAFPELMPPAAKRGDWVAVSVRDTMGRIVSRASNRIFVGLPLCRNPDYLKTVVEFAFSVAKSRTIINAAPAVFRPIVGHFLPWAKRAVRNAGVHVKPLIRLRVSKMQDAGDDQTDKSCDYLMWLIEEAQKTKQNLDIVVQGILVSNFAAIHTSSNSITHSLLNLAAYPQHVQPLREEIEGIIKEYGWTKEAIGKMWKLDSFMRESQRLSGISGISVMRKVLQDITLSDGTYLPKGTLVVAAAFATHTDERYYENPEVFEPFRFYDMRTENDALRKQYVNTSREFITFGHGKHACPGRFFAVNELKAMMAYIILHYDVKLEEGVSRPENVWIWHNISPASTKVLFRERQSKVQ</sequence>
<name>CY110_POSPM</name>
<protein>
    <recommendedName>
        <fullName evidence="5">Cytochrome P450 monooxygenase 110</fullName>
        <ecNumber evidence="4">1.-.-.-</ecNumber>
    </recommendedName>
</protein>
<dbReference type="EC" id="1.-.-.-" evidence="4"/>
<dbReference type="EMBL" id="AB573310">
    <property type="protein sequence ID" value="BAK09443.1"/>
    <property type="molecule type" value="mRNA"/>
</dbReference>
<dbReference type="SMR" id="F1SY99"/>
<dbReference type="GlyCosmos" id="F1SY99">
    <property type="glycosylation" value="1 site, No reported glycans"/>
</dbReference>
<dbReference type="GO" id="GO:0016020">
    <property type="term" value="C:membrane"/>
    <property type="evidence" value="ECO:0007669"/>
    <property type="project" value="UniProtKB-SubCell"/>
</dbReference>
<dbReference type="GO" id="GO:0020037">
    <property type="term" value="F:heme binding"/>
    <property type="evidence" value="ECO:0007669"/>
    <property type="project" value="InterPro"/>
</dbReference>
<dbReference type="GO" id="GO:0005506">
    <property type="term" value="F:iron ion binding"/>
    <property type="evidence" value="ECO:0007669"/>
    <property type="project" value="InterPro"/>
</dbReference>
<dbReference type="GO" id="GO:0004497">
    <property type="term" value="F:monooxygenase activity"/>
    <property type="evidence" value="ECO:0007669"/>
    <property type="project" value="UniProtKB-KW"/>
</dbReference>
<dbReference type="GO" id="GO:0016705">
    <property type="term" value="F:oxidoreductase activity, acting on paired donors, with incorporation or reduction of molecular oxygen"/>
    <property type="evidence" value="ECO:0007669"/>
    <property type="project" value="InterPro"/>
</dbReference>
<dbReference type="GO" id="GO:0019748">
    <property type="term" value="P:secondary metabolic process"/>
    <property type="evidence" value="ECO:0007669"/>
    <property type="project" value="UniProtKB-ARBA"/>
</dbReference>
<dbReference type="CDD" id="cd11041">
    <property type="entry name" value="CYP503A1-like"/>
    <property type="match status" value="1"/>
</dbReference>
<dbReference type="Gene3D" id="1.10.630.10">
    <property type="entry name" value="Cytochrome P450"/>
    <property type="match status" value="1"/>
</dbReference>
<dbReference type="InterPro" id="IPR001128">
    <property type="entry name" value="Cyt_P450"/>
</dbReference>
<dbReference type="InterPro" id="IPR017972">
    <property type="entry name" value="Cyt_P450_CS"/>
</dbReference>
<dbReference type="InterPro" id="IPR002401">
    <property type="entry name" value="Cyt_P450_E_grp-I"/>
</dbReference>
<dbReference type="InterPro" id="IPR036396">
    <property type="entry name" value="Cyt_P450_sf"/>
</dbReference>
<dbReference type="PANTHER" id="PTHR46206">
    <property type="entry name" value="CYTOCHROME P450"/>
    <property type="match status" value="1"/>
</dbReference>
<dbReference type="Pfam" id="PF00067">
    <property type="entry name" value="p450"/>
    <property type="match status" value="1"/>
</dbReference>
<dbReference type="PRINTS" id="PR00463">
    <property type="entry name" value="EP450I"/>
</dbReference>
<dbReference type="SUPFAM" id="SSF48264">
    <property type="entry name" value="Cytochrome P450"/>
    <property type="match status" value="1"/>
</dbReference>
<dbReference type="PROSITE" id="PS00086">
    <property type="entry name" value="CYTOCHROME_P450"/>
    <property type="match status" value="1"/>
</dbReference>
<feature type="chain" id="PRO_0000451361" description="Cytochrome P450 monooxygenase 110">
    <location>
        <begin position="1"/>
        <end position="498"/>
    </location>
</feature>
<feature type="transmembrane region" description="Helical" evidence="2">
    <location>
        <begin position="7"/>
        <end position="24"/>
    </location>
</feature>
<feature type="binding site" description="axial binding residue" evidence="1">
    <location>
        <position position="440"/>
    </location>
    <ligand>
        <name>heme</name>
        <dbReference type="ChEBI" id="CHEBI:30413"/>
    </ligand>
    <ligandPart>
        <name>Fe</name>
        <dbReference type="ChEBI" id="CHEBI:18248"/>
    </ligandPart>
</feature>
<feature type="glycosylation site" description="N-linked (GlcNAc...) asparagine" evidence="3">
    <location>
        <position position="425"/>
    </location>
</feature>
<proteinExistence type="evidence at protein level"/>
<keyword id="KW-0325">Glycoprotein</keyword>
<keyword id="KW-0349">Heme</keyword>
<keyword id="KW-0408">Iron</keyword>
<keyword id="KW-0472">Membrane</keyword>
<keyword id="KW-0479">Metal-binding</keyword>
<keyword id="KW-0503">Monooxygenase</keyword>
<keyword id="KW-0560">Oxidoreductase</keyword>
<keyword id="KW-0812">Transmembrane</keyword>
<keyword id="KW-1133">Transmembrane helix</keyword>
<comment type="function">
    <text evidence="4">Cytochrome P450 monooxygenase that is able to use dehydroabietic acid and testosterone as substrates for oxidation, suggesting that the natural substrate(s) may be structurally related to steroid compounds.</text>
</comment>
<comment type="cofactor">
    <cofactor evidence="1">
        <name>heme</name>
        <dbReference type="ChEBI" id="CHEBI:30413"/>
    </cofactor>
</comment>
<comment type="pathway">
    <text evidence="6">Secondary metabolite biosynthesis.</text>
</comment>
<comment type="subcellular location">
    <subcellularLocation>
        <location evidence="2">Membrane</location>
        <topology evidence="2">Single-pass membrane protein</topology>
    </subcellularLocation>
</comment>
<comment type="similarity">
    <text evidence="6">Belongs to the cytochrome P450 family.</text>
</comment>
<gene>
    <name evidence="5" type="primary">CYP110</name>
    <name evidence="5" type="synonym">CYP512N6v2</name>
</gene>
<evidence type="ECO:0000250" key="1">
    <source>
        <dbReference type="UniProtKB" id="P04798"/>
    </source>
</evidence>
<evidence type="ECO:0000255" key="2"/>
<evidence type="ECO:0000255" key="3">
    <source>
        <dbReference type="PROSITE-ProRule" id="PRU00498"/>
    </source>
</evidence>
<evidence type="ECO:0000269" key="4">
    <source>
    </source>
</evidence>
<evidence type="ECO:0000303" key="5">
    <source>
    </source>
</evidence>
<evidence type="ECO:0000305" key="6"/>
<organism>
    <name type="scientific">Postia placenta (strain ATCC 44394 / Madison 698-R)</name>
    <name type="common">Brown rot fungus</name>
    <name type="synonym">Poria monticola</name>
    <dbReference type="NCBI Taxonomy" id="561896"/>
    <lineage>
        <taxon>Eukaryota</taxon>
        <taxon>Fungi</taxon>
        <taxon>Dikarya</taxon>
        <taxon>Basidiomycota</taxon>
        <taxon>Agaricomycotina</taxon>
        <taxon>Agaricomycetes</taxon>
        <taxon>Polyporales</taxon>
        <taxon>Adustoporiaceae</taxon>
        <taxon>Rhodonia</taxon>
    </lineage>
</organism>
<reference key="1">
    <citation type="journal article" date="2012" name="Arch. Microbiol.">
        <title>Molecular identification and functional characterization of cytochrome P450 monooxygenases from the brown-rot basidiomycete Postia placenta.</title>
        <authorList>
            <person name="Ide M."/>
            <person name="Ichinose H."/>
            <person name="Wariishi H."/>
        </authorList>
    </citation>
    <scope>NUCLEOTIDE SEQUENCE [MRNA]</scope>
    <scope>IDENTIFICATION</scope>
    <scope>FUNCTION</scope>
    <scope>CATALYTIC ACTIVITY</scope>
    <source>
        <strain>ATCC 44394 / Madison 698-R</strain>
    </source>
</reference>